<reference key="1">
    <citation type="journal article" date="2004" name="Proc. Natl. Acad. Sci. U.S.A.">
        <title>Complete genomes of two clinical Staphylococcus aureus strains: evidence for the rapid evolution of virulence and drug resistance.</title>
        <authorList>
            <person name="Holden M.T.G."/>
            <person name="Feil E.J."/>
            <person name="Lindsay J.A."/>
            <person name="Peacock S.J."/>
            <person name="Day N.P.J."/>
            <person name="Enright M.C."/>
            <person name="Foster T.J."/>
            <person name="Moore C.E."/>
            <person name="Hurst L."/>
            <person name="Atkin R."/>
            <person name="Barron A."/>
            <person name="Bason N."/>
            <person name="Bentley S.D."/>
            <person name="Chillingworth C."/>
            <person name="Chillingworth T."/>
            <person name="Churcher C."/>
            <person name="Clark L."/>
            <person name="Corton C."/>
            <person name="Cronin A."/>
            <person name="Doggett J."/>
            <person name="Dowd L."/>
            <person name="Feltwell T."/>
            <person name="Hance Z."/>
            <person name="Harris B."/>
            <person name="Hauser H."/>
            <person name="Holroyd S."/>
            <person name="Jagels K."/>
            <person name="James K.D."/>
            <person name="Lennard N."/>
            <person name="Line A."/>
            <person name="Mayes R."/>
            <person name="Moule S."/>
            <person name="Mungall K."/>
            <person name="Ormond D."/>
            <person name="Quail M.A."/>
            <person name="Rabbinowitsch E."/>
            <person name="Rutherford K.M."/>
            <person name="Sanders M."/>
            <person name="Sharp S."/>
            <person name="Simmonds M."/>
            <person name="Stevens K."/>
            <person name="Whitehead S."/>
            <person name="Barrell B.G."/>
            <person name="Spratt B.G."/>
            <person name="Parkhill J."/>
        </authorList>
    </citation>
    <scope>NUCLEOTIDE SEQUENCE [LARGE SCALE GENOMIC DNA]</scope>
    <source>
        <strain>MSSA476</strain>
    </source>
</reference>
<sequence>MINKNDIVADVVTDYPKAADIFRSVGIDFCCGGQVSIEAASLEKKNVDLNELLQRLNDVEQTNTPGSLNPKFLNVSSLIQYIQAAYHEPLREEFKNLTPYVTKLSKVHGPNHPYLVELKETYDTFKNGMLEHMQKEDDVDFPKLIKYEQGEVVDDINTVIDDLVSDHIATGQLLVKMSDLTSSYEPPIEACGTWRLVYQRLKALEVLTHEHVHLENHVLFKKVS</sequence>
<keyword id="KW-0963">Cytoplasm</keyword>
<keyword id="KW-0408">Iron</keyword>
<keyword id="KW-0479">Metal-binding</keyword>
<keyword id="KW-0346">Stress response</keyword>
<comment type="function">
    <text evidence="1">Di-iron-containing protein involved in the repair of iron-sulfur clusters damaged by oxidative and nitrosative stress conditions.</text>
</comment>
<comment type="subunit">
    <text evidence="1">Homodimer.</text>
</comment>
<comment type="subcellular location">
    <subcellularLocation>
        <location evidence="1">Cytoplasm</location>
    </subcellularLocation>
</comment>
<comment type="similarity">
    <text evidence="1">Belongs to the RIC family. ScdA subfamily.</text>
</comment>
<protein>
    <recommendedName>
        <fullName evidence="1">Iron-sulfur cluster repair protein ScdA</fullName>
    </recommendedName>
</protein>
<feature type="chain" id="PRO_0000220339" description="Iron-sulfur cluster repair protein ScdA">
    <location>
        <begin position="1"/>
        <end position="224"/>
    </location>
</feature>
<dbReference type="EMBL" id="BX571857">
    <property type="protein sequence ID" value="CAG42006.1"/>
    <property type="molecule type" value="Genomic_DNA"/>
</dbReference>
<dbReference type="RefSeq" id="WP_000608831.1">
    <property type="nucleotide sequence ID" value="NC_002953.3"/>
</dbReference>
<dbReference type="SMR" id="Q6GCL3"/>
<dbReference type="KEGG" id="sas:SAS0236"/>
<dbReference type="HOGENOM" id="CLU_076075_0_1_9"/>
<dbReference type="GO" id="GO:0005737">
    <property type="term" value="C:cytoplasm"/>
    <property type="evidence" value="ECO:0007669"/>
    <property type="project" value="UniProtKB-SubCell"/>
</dbReference>
<dbReference type="GO" id="GO:0046872">
    <property type="term" value="F:metal ion binding"/>
    <property type="evidence" value="ECO:0007669"/>
    <property type="project" value="UniProtKB-KW"/>
</dbReference>
<dbReference type="GO" id="GO:0030091">
    <property type="term" value="P:protein repair"/>
    <property type="evidence" value="ECO:0007669"/>
    <property type="project" value="UniProtKB-UniRule"/>
</dbReference>
<dbReference type="GO" id="GO:0051409">
    <property type="term" value="P:response to nitrosative stress"/>
    <property type="evidence" value="ECO:0007669"/>
    <property type="project" value="UniProtKB-UniRule"/>
</dbReference>
<dbReference type="GO" id="GO:0006979">
    <property type="term" value="P:response to oxidative stress"/>
    <property type="evidence" value="ECO:0007669"/>
    <property type="project" value="UniProtKB-UniRule"/>
</dbReference>
<dbReference type="FunFam" id="1.20.120.520:FF:000003">
    <property type="entry name" value="Iron-sulfur cluster repair protein ScdA"/>
    <property type="match status" value="1"/>
</dbReference>
<dbReference type="Gene3D" id="1.20.120.520">
    <property type="entry name" value="nmb1532 protein domain like"/>
    <property type="match status" value="1"/>
</dbReference>
<dbReference type="Gene3D" id="1.10.3910.10">
    <property type="entry name" value="SP0561-like"/>
    <property type="match status" value="1"/>
</dbReference>
<dbReference type="HAMAP" id="MF_01156">
    <property type="entry name" value="RIC_ScdA"/>
    <property type="match status" value="1"/>
</dbReference>
<dbReference type="InterPro" id="IPR012312">
    <property type="entry name" value="Hemerythrin-like"/>
</dbReference>
<dbReference type="InterPro" id="IPR019903">
    <property type="entry name" value="RIC_family"/>
</dbReference>
<dbReference type="InterPro" id="IPR023551">
    <property type="entry name" value="ScdA"/>
</dbReference>
<dbReference type="InterPro" id="IPR038062">
    <property type="entry name" value="ScdA-like_N_sf"/>
</dbReference>
<dbReference type="NCBIfam" id="TIGR03652">
    <property type="entry name" value="FeS_repair_RIC"/>
    <property type="match status" value="1"/>
</dbReference>
<dbReference type="NCBIfam" id="NF009777">
    <property type="entry name" value="PRK13276.1"/>
    <property type="match status" value="1"/>
</dbReference>
<dbReference type="PANTHER" id="PTHR36438">
    <property type="entry name" value="IRON-SULFUR CLUSTER REPAIR PROTEIN YTFE"/>
    <property type="match status" value="1"/>
</dbReference>
<dbReference type="PANTHER" id="PTHR36438:SF1">
    <property type="entry name" value="IRON-SULFUR CLUSTER REPAIR PROTEIN YTFE"/>
    <property type="match status" value="1"/>
</dbReference>
<dbReference type="Pfam" id="PF01814">
    <property type="entry name" value="Hemerythrin"/>
    <property type="match status" value="1"/>
</dbReference>
<dbReference type="Pfam" id="PF04405">
    <property type="entry name" value="ScdA_N"/>
    <property type="match status" value="1"/>
</dbReference>
<dbReference type="SUPFAM" id="SSF140683">
    <property type="entry name" value="SP0561-like"/>
    <property type="match status" value="1"/>
</dbReference>
<accession>Q6GCL3</accession>
<name>SCDA_STAAS</name>
<gene>
    <name evidence="1" type="primary">scdA</name>
    <name type="ordered locus">SAS0236</name>
</gene>
<evidence type="ECO:0000255" key="1">
    <source>
        <dbReference type="HAMAP-Rule" id="MF_01156"/>
    </source>
</evidence>
<organism>
    <name type="scientific">Staphylococcus aureus (strain MSSA476)</name>
    <dbReference type="NCBI Taxonomy" id="282459"/>
    <lineage>
        <taxon>Bacteria</taxon>
        <taxon>Bacillati</taxon>
        <taxon>Bacillota</taxon>
        <taxon>Bacilli</taxon>
        <taxon>Bacillales</taxon>
        <taxon>Staphylococcaceae</taxon>
        <taxon>Staphylococcus</taxon>
    </lineage>
</organism>
<proteinExistence type="inferred from homology"/>